<reference key="1">
    <citation type="submission" date="2003-01" db="EMBL/GenBank/DDBJ databases">
        <authorList>
            <consortium name="NIH - Xenopus Gene Collection (XGC) project"/>
        </authorList>
    </citation>
    <scope>NUCLEOTIDE SEQUENCE [LARGE SCALE MRNA]</scope>
    <source>
        <tissue>Embryo</tissue>
    </source>
</reference>
<keyword id="KW-1003">Cell membrane</keyword>
<keyword id="KW-0175">Coiled coil</keyword>
<keyword id="KW-0325">Glycoprotein</keyword>
<keyword id="KW-0472">Membrane</keyword>
<keyword id="KW-1185">Reference proteome</keyword>
<keyword id="KW-0812">Transmembrane</keyword>
<keyword id="KW-1133">Transmembrane helix</keyword>
<proteinExistence type="evidence at transcript level"/>
<dbReference type="EMBL" id="BC043881">
    <property type="protein sequence ID" value="AAH43881.1"/>
    <property type="molecule type" value="mRNA"/>
</dbReference>
<dbReference type="RefSeq" id="NP_001080584.1">
    <property type="nucleotide sequence ID" value="NM_001087115.1"/>
</dbReference>
<dbReference type="SMR" id="Q7ZYA0"/>
<dbReference type="GlyCosmos" id="Q7ZYA0">
    <property type="glycosylation" value="2 sites, No reported glycans"/>
</dbReference>
<dbReference type="DNASU" id="380276"/>
<dbReference type="GeneID" id="380276"/>
<dbReference type="KEGG" id="xla:380276"/>
<dbReference type="AGR" id="Xenbase:XB-GENE-991218"/>
<dbReference type="CTD" id="380276"/>
<dbReference type="Xenbase" id="XB-GENE-991218">
    <property type="gene designation" value="lmbrd2.L"/>
</dbReference>
<dbReference type="OrthoDB" id="203099at2759"/>
<dbReference type="Proteomes" id="UP000186698">
    <property type="component" value="Chromosome 1L"/>
</dbReference>
<dbReference type="Bgee" id="380276">
    <property type="expression patterns" value="Expressed in testis and 19 other cell types or tissues"/>
</dbReference>
<dbReference type="GO" id="GO:0016020">
    <property type="term" value="C:membrane"/>
    <property type="evidence" value="ECO:0000318"/>
    <property type="project" value="GO_Central"/>
</dbReference>
<dbReference type="GO" id="GO:0005886">
    <property type="term" value="C:plasma membrane"/>
    <property type="evidence" value="ECO:0007669"/>
    <property type="project" value="UniProtKB-SubCell"/>
</dbReference>
<dbReference type="GO" id="GO:0071875">
    <property type="term" value="P:adrenergic receptor signaling pathway"/>
    <property type="evidence" value="ECO:0000250"/>
    <property type="project" value="UniProtKB"/>
</dbReference>
<dbReference type="InterPro" id="IPR051584">
    <property type="entry name" value="GPCR-associated_LMBR1"/>
</dbReference>
<dbReference type="InterPro" id="IPR006876">
    <property type="entry name" value="LMBR1-like_membr_prot"/>
</dbReference>
<dbReference type="PANTHER" id="PTHR21355">
    <property type="entry name" value="G-PROTEIN COUPLED RECEPTOR-ASSOCIATED PROTEIN LMBRD2"/>
    <property type="match status" value="1"/>
</dbReference>
<dbReference type="PANTHER" id="PTHR21355:SF0">
    <property type="entry name" value="G-PROTEIN COUPLED RECEPTOR-ASSOCIATED PROTEIN LMBRD2"/>
    <property type="match status" value="1"/>
</dbReference>
<dbReference type="Pfam" id="PF04791">
    <property type="entry name" value="LMBR1"/>
    <property type="match status" value="1"/>
</dbReference>
<name>LMBD2_XENLA</name>
<evidence type="ECO:0000250" key="1">
    <source>
        <dbReference type="UniProtKB" id="Q68DH5"/>
    </source>
</evidence>
<evidence type="ECO:0000255" key="2"/>
<evidence type="ECO:0000256" key="3">
    <source>
        <dbReference type="SAM" id="MobiDB-lite"/>
    </source>
</evidence>
<evidence type="ECO:0000305" key="4"/>
<sequence length="713" mass="82694">MSGVALGIEIVSVFFLALFLLHRYGDFKKQHKLVIVGTLLAWYLCFLIVFIIPLDVSTTIYNRCVARHAVTPAPSNITVLSPTPGIVSNTTAQNHLPSADKLRSSDNSLEECSKPWSYIPRGIMPIFWRVVYWTSQFLTWILMPFMQSYARSGGFSITGKIKTALIENAIYYGTYLLIFGALLIYVAVNPNLHLEWYQLQTIGIAAANTWGLFLLVLLMGYGLVEIPRSQWNGAKKGYLLMKTYFKAAKLMTEKADAEETLEDVMEEVRKVNECIKYNHPLRKCVDTILKKCPAEYQEKMGRNMDDYEDFEEKNISYPSEKTLVKLHKQVIYAVQRHRRTQVQWSILLEQAFHLEDVAKNETSAAKQFVHTFPHQEPESWIMRRLYTPTIEWYWECLLRPWCSRILAVILALFSTVVVWSECTFFSAKPVLSLFAVFIQQAEQTHNYIYVEVVCFLSIFFLSICVYSTVFRIRVFNYYYLASHHQTDAYSLLFSGMLFCRLTPPLCLNFLGLTHMDVSISHQNIEPTAYTSIMGSLRVLPLIADVFYIYYPMLVLILCIATYFSLGTRCLNLLGFQQFMGDNDMTSDLTDEGKELIKREKRKRQRLEDGETRRREWKERYPTNREDTSRNRSVNSDQKEPTYTEMTTNRSSKYTRASNRTERDRIELLQDAEPLDFNADTFNDDPLDSESGRYQPGGRYLSMSQSNSRIFDDV</sequence>
<protein>
    <recommendedName>
        <fullName evidence="1">G-protein coupled receptor-associated protein LMBRD2</fullName>
    </recommendedName>
    <alternativeName>
        <fullName>LMBR1 domain-containing protein 2</fullName>
    </alternativeName>
</protein>
<feature type="chain" id="PRO_0000299165" description="G-protein coupled receptor-associated protein LMBRD2">
    <location>
        <begin position="1"/>
        <end position="713"/>
    </location>
</feature>
<feature type="topological domain" description="Extracellular" evidence="2">
    <location>
        <begin position="1"/>
        <end position="3"/>
    </location>
</feature>
<feature type="transmembrane region" description="Helical" evidence="2">
    <location>
        <begin position="4"/>
        <end position="21"/>
    </location>
</feature>
<feature type="topological domain" description="Cytoplasmic" evidence="2">
    <location>
        <begin position="22"/>
        <end position="32"/>
    </location>
</feature>
<feature type="transmembrane region" description="Helical" evidence="2">
    <location>
        <begin position="33"/>
        <end position="53"/>
    </location>
</feature>
<feature type="topological domain" description="Extracellular" evidence="2">
    <location>
        <begin position="54"/>
        <end position="122"/>
    </location>
</feature>
<feature type="transmembrane region" description="Helical" evidence="2">
    <location>
        <begin position="123"/>
        <end position="143"/>
    </location>
</feature>
<feature type="topological domain" description="Cytoplasmic" evidence="2">
    <location>
        <begin position="144"/>
        <end position="167"/>
    </location>
</feature>
<feature type="transmembrane region" description="Helical" evidence="2">
    <location>
        <begin position="168"/>
        <end position="188"/>
    </location>
</feature>
<feature type="topological domain" description="Extracellular" evidence="2">
    <location>
        <begin position="189"/>
        <end position="203"/>
    </location>
</feature>
<feature type="transmembrane region" description="Helical" evidence="2">
    <location>
        <begin position="204"/>
        <end position="224"/>
    </location>
</feature>
<feature type="topological domain" description="Cytoplasmic" evidence="2">
    <location>
        <begin position="225"/>
        <end position="404"/>
    </location>
</feature>
<feature type="transmembrane region" description="Helical" evidence="2">
    <location>
        <begin position="405"/>
        <end position="425"/>
    </location>
</feature>
<feature type="topological domain" description="Extracellular" evidence="2">
    <location>
        <begin position="426"/>
        <end position="449"/>
    </location>
</feature>
<feature type="transmembrane region" description="Helical" evidence="2">
    <location>
        <begin position="450"/>
        <end position="470"/>
    </location>
</feature>
<feature type="topological domain" description="Cytoplasmic" evidence="2">
    <location>
        <begin position="471"/>
        <end position="490"/>
    </location>
</feature>
<feature type="transmembrane region" description="Helical" evidence="2">
    <location>
        <begin position="491"/>
        <end position="511"/>
    </location>
</feature>
<feature type="topological domain" description="Extracellular" evidence="2">
    <location>
        <begin position="512"/>
        <end position="538"/>
    </location>
</feature>
<feature type="transmembrane region" description="Helical" evidence="2">
    <location>
        <begin position="539"/>
        <end position="559"/>
    </location>
</feature>
<feature type="topological domain" description="Cytoplasmic" evidence="2">
    <location>
        <begin position="560"/>
        <end position="713"/>
    </location>
</feature>
<feature type="region of interest" description="Disordered" evidence="3">
    <location>
        <begin position="600"/>
        <end position="713"/>
    </location>
</feature>
<feature type="coiled-coil region" evidence="2">
    <location>
        <begin position="246"/>
        <end position="314"/>
    </location>
</feature>
<feature type="coiled-coil region" evidence="2">
    <location>
        <begin position="587"/>
        <end position="620"/>
    </location>
</feature>
<feature type="compositionally biased region" description="Basic and acidic residues" evidence="3">
    <location>
        <begin position="605"/>
        <end position="629"/>
    </location>
</feature>
<feature type="compositionally biased region" description="Polar residues" evidence="3">
    <location>
        <begin position="643"/>
        <end position="657"/>
    </location>
</feature>
<feature type="compositionally biased region" description="Basic and acidic residues" evidence="3">
    <location>
        <begin position="658"/>
        <end position="667"/>
    </location>
</feature>
<feature type="compositionally biased region" description="Polar residues" evidence="3">
    <location>
        <begin position="701"/>
        <end position="713"/>
    </location>
</feature>
<feature type="glycosylation site" description="N-linked (GlcNAc...) asparagine" evidence="2">
    <location>
        <position position="76"/>
    </location>
</feature>
<feature type="glycosylation site" description="N-linked (GlcNAc...) asparagine" evidence="2">
    <location>
        <position position="89"/>
    </location>
</feature>
<organism>
    <name type="scientific">Xenopus laevis</name>
    <name type="common">African clawed frog</name>
    <dbReference type="NCBI Taxonomy" id="8355"/>
    <lineage>
        <taxon>Eukaryota</taxon>
        <taxon>Metazoa</taxon>
        <taxon>Chordata</taxon>
        <taxon>Craniata</taxon>
        <taxon>Vertebrata</taxon>
        <taxon>Euteleostomi</taxon>
        <taxon>Amphibia</taxon>
        <taxon>Batrachia</taxon>
        <taxon>Anura</taxon>
        <taxon>Pipoidea</taxon>
        <taxon>Pipidae</taxon>
        <taxon>Xenopodinae</taxon>
        <taxon>Xenopus</taxon>
        <taxon>Xenopus</taxon>
    </lineage>
</organism>
<comment type="function">
    <text evidence="1">May associate with G-protein coupled receptors and regulate downstream signaling pathways.</text>
</comment>
<comment type="subcellular location">
    <subcellularLocation>
        <location evidence="1">Cell membrane</location>
        <topology evidence="2">Multi-pass membrane protein</topology>
    </subcellularLocation>
</comment>
<comment type="similarity">
    <text evidence="4">Belongs to the LIMR family.</text>
</comment>
<accession>Q7ZYA0</accession>
<gene>
    <name type="primary">lmbrd2</name>
</gene>